<protein>
    <recommendedName>
        <fullName>Histone H3.2</fullName>
    </recommendedName>
</protein>
<name>H32_TETNI</name>
<organism>
    <name type="scientific">Tetrahymena nipissingi</name>
    <dbReference type="NCBI Taxonomy" id="5922"/>
    <lineage>
        <taxon>Eukaryota</taxon>
        <taxon>Sar</taxon>
        <taxon>Alveolata</taxon>
        <taxon>Ciliophora</taxon>
        <taxon>Intramacronucleata</taxon>
        <taxon>Oligohymenophorea</taxon>
        <taxon>Hymenostomatida</taxon>
        <taxon>Tetrahymenina</taxon>
        <taxon>Tetrahymenidae</taxon>
        <taxon>Tetrahymena</taxon>
    </lineage>
</organism>
<comment type="function">
    <text>Core component of nucleosome. Nucleosomes wrap and compact DNA into chromatin, limiting DNA accessibility to the cellular machineries which require DNA as a template. Histones thereby play a central role in transcription regulation, DNA repair, DNA replication and chromosomal stability. DNA accessibility is regulated via a complex set of post-translational modifications of histones, also called histone code, and nucleosome remodeling.</text>
</comment>
<comment type="subunit">
    <text>The nucleosome is a histone octamer containing two molecules each of H2A, H2B, H3 and H4 assembled in one H3-H4 heterotetramer and two H2A-H2B heterodimers. The octamer wraps approximately 147 bp of DNA.</text>
</comment>
<comment type="subcellular location">
    <subcellularLocation>
        <location evidence="1">Nucleus</location>
    </subcellularLocation>
    <subcellularLocation>
        <location evidence="1">Chromosome</location>
    </subcellularLocation>
</comment>
<comment type="similarity">
    <text evidence="3">Belongs to the histone H3 family.</text>
</comment>
<accession>P69121</accession>
<accession>P17705</accession>
<proteinExistence type="inferred from homology"/>
<dbReference type="EMBL" id="X17138">
    <property type="protein sequence ID" value="CAA35010.1"/>
    <property type="molecule type" value="Genomic_DNA"/>
</dbReference>
<dbReference type="GO" id="GO:0000786">
    <property type="term" value="C:nucleosome"/>
    <property type="evidence" value="ECO:0007669"/>
    <property type="project" value="UniProtKB-KW"/>
</dbReference>
<dbReference type="GO" id="GO:0005634">
    <property type="term" value="C:nucleus"/>
    <property type="evidence" value="ECO:0007669"/>
    <property type="project" value="UniProtKB-SubCell"/>
</dbReference>
<dbReference type="GO" id="GO:0003677">
    <property type="term" value="F:DNA binding"/>
    <property type="evidence" value="ECO:0007669"/>
    <property type="project" value="UniProtKB-KW"/>
</dbReference>
<dbReference type="GO" id="GO:0046982">
    <property type="term" value="F:protein heterodimerization activity"/>
    <property type="evidence" value="ECO:0007669"/>
    <property type="project" value="InterPro"/>
</dbReference>
<dbReference type="GO" id="GO:0030527">
    <property type="term" value="F:structural constituent of chromatin"/>
    <property type="evidence" value="ECO:0007669"/>
    <property type="project" value="InterPro"/>
</dbReference>
<dbReference type="Gene3D" id="1.10.20.10">
    <property type="entry name" value="Histone, subunit A"/>
    <property type="match status" value="1"/>
</dbReference>
<dbReference type="InterPro" id="IPR009072">
    <property type="entry name" value="Histone-fold"/>
</dbReference>
<dbReference type="InterPro" id="IPR000164">
    <property type="entry name" value="Histone_H3/CENP-A"/>
</dbReference>
<dbReference type="PANTHER" id="PTHR11426">
    <property type="entry name" value="HISTONE H3"/>
    <property type="match status" value="1"/>
</dbReference>
<dbReference type="PRINTS" id="PR00622">
    <property type="entry name" value="HISTONEH3"/>
</dbReference>
<dbReference type="SUPFAM" id="SSF47113">
    <property type="entry name" value="Histone-fold"/>
    <property type="match status" value="1"/>
</dbReference>
<dbReference type="PROSITE" id="PS00322">
    <property type="entry name" value="HISTONE_H3_1"/>
    <property type="match status" value="1"/>
</dbReference>
<sequence>MARTKQTARKSTGAKAPRKQLASKAARKSAPATGGIKKPHR</sequence>
<keyword id="KW-0158">Chromosome</keyword>
<keyword id="KW-0238">DNA-binding</keyword>
<keyword id="KW-0544">Nucleosome core</keyword>
<keyword id="KW-0539">Nucleus</keyword>
<feature type="initiator methionine" description="Removed" evidence="1">
    <location>
        <position position="1"/>
    </location>
</feature>
<feature type="chain" id="PRO_0000221343" description="Histone H3.2">
    <location>
        <begin position="2"/>
        <end position="41" status="greater than"/>
    </location>
</feature>
<feature type="region of interest" description="Disordered" evidence="2">
    <location>
        <begin position="1"/>
        <end position="41"/>
    </location>
</feature>
<feature type="non-terminal residue">
    <location>
        <position position="41"/>
    </location>
</feature>
<reference key="1">
    <citation type="journal article" date="1990" name="Nucleic Acids Res.">
        <title>Characterization of the promoter region of Tetrahymena genes.</title>
        <authorList>
            <person name="Brunk C.F."/>
            <person name="Sadler L.A."/>
        </authorList>
    </citation>
    <scope>NUCLEOTIDE SEQUENCE [GENOMIC DNA]</scope>
</reference>
<reference key="2">
    <citation type="journal article" date="1990" name="J. Mol. Evol.">
        <title>Phylogenetic relationships among Tetrahymena species determined using the polymerase chain reaction.</title>
        <authorList>
            <person name="Brunk C.F."/>
            <person name="Kahn R.W."/>
            <person name="Sadler L.A."/>
        </authorList>
    </citation>
    <scope>NUCLEOTIDE SEQUENCE [GENOMIC DNA]</scope>
</reference>
<evidence type="ECO:0000250" key="1"/>
<evidence type="ECO:0000256" key="2">
    <source>
        <dbReference type="SAM" id="MobiDB-lite"/>
    </source>
</evidence>
<evidence type="ECO:0000305" key="3"/>